<proteinExistence type="evidence at transcript level"/>
<gene>
    <name evidence="5" type="primary">IRX14</name>
    <name evidence="6" type="synonym">GT43J</name>
    <name evidence="11" type="ordered locus">Os06g0687900</name>
    <name evidence="7" type="ordered locus">LOC_Os06g47340</name>
    <name evidence="12" type="ORF">OsJ_22428</name>
    <name evidence="10" type="ORF">P0623A10.33</name>
    <name evidence="9" type="ORF">P0661G04.6</name>
</gene>
<evidence type="ECO:0000255" key="1"/>
<evidence type="ECO:0000256" key="2">
    <source>
        <dbReference type="SAM" id="MobiDB-lite"/>
    </source>
</evidence>
<evidence type="ECO:0000269" key="3">
    <source>
    </source>
</evidence>
<evidence type="ECO:0000269" key="4">
    <source>
    </source>
</evidence>
<evidence type="ECO:0000303" key="5">
    <source>
    </source>
</evidence>
<evidence type="ECO:0000303" key="6">
    <source>
    </source>
</evidence>
<evidence type="ECO:0000305" key="7"/>
<evidence type="ECO:0000305" key="8">
    <source>
    </source>
</evidence>
<evidence type="ECO:0000312" key="9">
    <source>
        <dbReference type="EMBL" id="BAD45607.1"/>
    </source>
</evidence>
<evidence type="ECO:0000312" key="10">
    <source>
        <dbReference type="EMBL" id="BAD46063.1"/>
    </source>
</evidence>
<evidence type="ECO:0000312" key="11">
    <source>
        <dbReference type="EMBL" id="BAF20325.1"/>
    </source>
</evidence>
<evidence type="ECO:0000312" key="12">
    <source>
        <dbReference type="EMBL" id="EAZ38081.1"/>
    </source>
</evidence>
<dbReference type="EC" id="2.4.2.-" evidence="7"/>
<dbReference type="EMBL" id="KJ206907">
    <property type="protein sequence ID" value="AHW98790.1"/>
    <property type="molecule type" value="mRNA"/>
</dbReference>
<dbReference type="EMBL" id="AP003935">
    <property type="protein sequence ID" value="BAD45607.1"/>
    <property type="molecule type" value="Genomic_DNA"/>
</dbReference>
<dbReference type="EMBL" id="AP005395">
    <property type="protein sequence ID" value="BAD46063.1"/>
    <property type="molecule type" value="Genomic_DNA"/>
</dbReference>
<dbReference type="EMBL" id="AP008212">
    <property type="protein sequence ID" value="BAF20325.1"/>
    <property type="status" value="ALT_INIT"/>
    <property type="molecule type" value="Genomic_DNA"/>
</dbReference>
<dbReference type="EMBL" id="AP014962">
    <property type="protein sequence ID" value="BAS99209.1"/>
    <property type="status" value="ALT_SEQ"/>
    <property type="molecule type" value="Genomic_DNA"/>
</dbReference>
<dbReference type="EMBL" id="CM000143">
    <property type="protein sequence ID" value="EAZ38081.1"/>
    <property type="molecule type" value="Genomic_DNA"/>
</dbReference>
<dbReference type="EMBL" id="AB054003">
    <property type="protein sequence ID" value="BAB20991.1"/>
    <property type="status" value="ALT_INIT"/>
    <property type="molecule type" value="mRNA"/>
</dbReference>
<dbReference type="RefSeq" id="NP_001389851.1">
    <property type="nucleotide sequence ID" value="NM_001402922.1"/>
</dbReference>
<dbReference type="RefSeq" id="XP_015643675.1">
    <property type="nucleotide sequence ID" value="XM_015788189.1"/>
</dbReference>
<dbReference type="SMR" id="Q653F4"/>
<dbReference type="FunCoup" id="Q653F4">
    <property type="interactions" value="948"/>
</dbReference>
<dbReference type="STRING" id="39947.Q653F4"/>
<dbReference type="CAZy" id="GT43">
    <property type="family name" value="Glycosyltransferase Family 43"/>
</dbReference>
<dbReference type="GlyCosmos" id="Q653F4">
    <property type="glycosylation" value="4 sites, No reported glycans"/>
</dbReference>
<dbReference type="iPTMnet" id="Q653F4"/>
<dbReference type="PaxDb" id="39947-Q653F4"/>
<dbReference type="GeneID" id="4341895"/>
<dbReference type="KEGG" id="dosa:Os06g0687900"/>
<dbReference type="eggNOG" id="KOG1476">
    <property type="taxonomic scope" value="Eukaryota"/>
</dbReference>
<dbReference type="HOGENOM" id="CLU_2055752_0_0_1"/>
<dbReference type="InParanoid" id="Q653F4"/>
<dbReference type="OrthoDB" id="675023at2759"/>
<dbReference type="PlantReactome" id="R-OSA-5654909">
    <property type="pathway name" value="Xylan biosynthesis"/>
</dbReference>
<dbReference type="Proteomes" id="UP000000763">
    <property type="component" value="Chromosome 6"/>
</dbReference>
<dbReference type="Proteomes" id="UP000007752">
    <property type="component" value="Chromosome 6"/>
</dbReference>
<dbReference type="Proteomes" id="UP000059680">
    <property type="component" value="Chromosome 6"/>
</dbReference>
<dbReference type="GO" id="GO:0000139">
    <property type="term" value="C:Golgi membrane"/>
    <property type="evidence" value="ECO:0000314"/>
    <property type="project" value="UniProtKB"/>
</dbReference>
<dbReference type="GO" id="GO:0015018">
    <property type="term" value="F:galactosylgalactosylxylosylprotein 3-beta-glucuronosyltransferase activity"/>
    <property type="evidence" value="ECO:0007669"/>
    <property type="project" value="InterPro"/>
</dbReference>
<dbReference type="GO" id="GO:0042285">
    <property type="term" value="F:xylosyltransferase activity"/>
    <property type="evidence" value="ECO:0000318"/>
    <property type="project" value="GO_Central"/>
</dbReference>
<dbReference type="GO" id="GO:0071555">
    <property type="term" value="P:cell wall organization"/>
    <property type="evidence" value="ECO:0007669"/>
    <property type="project" value="UniProtKB-KW"/>
</dbReference>
<dbReference type="GO" id="GO:0010417">
    <property type="term" value="P:glucuronoxylan biosynthetic process"/>
    <property type="evidence" value="ECO:0000318"/>
    <property type="project" value="GO_Central"/>
</dbReference>
<dbReference type="GO" id="GO:0009834">
    <property type="term" value="P:plant-type secondary cell wall biogenesis"/>
    <property type="evidence" value="ECO:0000318"/>
    <property type="project" value="GO_Central"/>
</dbReference>
<dbReference type="GO" id="GO:0045492">
    <property type="term" value="P:xylan biosynthetic process"/>
    <property type="evidence" value="ECO:0000314"/>
    <property type="project" value="UniProtKB"/>
</dbReference>
<dbReference type="FunFam" id="3.90.550.10:FF:000096">
    <property type="entry name" value="Glycosyltransferases"/>
    <property type="match status" value="1"/>
</dbReference>
<dbReference type="Gene3D" id="3.90.550.10">
    <property type="entry name" value="Spore Coat Polysaccharide Biosynthesis Protein SpsA, Chain A"/>
    <property type="match status" value="1"/>
</dbReference>
<dbReference type="InterPro" id="IPR005027">
    <property type="entry name" value="Glyco_trans_43"/>
</dbReference>
<dbReference type="InterPro" id="IPR029044">
    <property type="entry name" value="Nucleotide-diphossugar_trans"/>
</dbReference>
<dbReference type="PANTHER" id="PTHR10896:SF17">
    <property type="entry name" value="BETA-1,4-XYLOSYLTRANSFERASE IRX14H-RELATED"/>
    <property type="match status" value="1"/>
</dbReference>
<dbReference type="PANTHER" id="PTHR10896">
    <property type="entry name" value="GALACTOSYLGALACTOSYLXYLOSYLPROTEIN 3-BETA-GLUCURONOSYLTRANSFERASE BETA-1,3-GLUCURONYLTRANSFERASE"/>
    <property type="match status" value="1"/>
</dbReference>
<dbReference type="Pfam" id="PF03360">
    <property type="entry name" value="Glyco_transf_43"/>
    <property type="match status" value="1"/>
</dbReference>
<dbReference type="SUPFAM" id="SSF53448">
    <property type="entry name" value="Nucleotide-diphospho-sugar transferases"/>
    <property type="match status" value="1"/>
</dbReference>
<organism>
    <name type="scientific">Oryza sativa subsp. japonica</name>
    <name type="common">Rice</name>
    <dbReference type="NCBI Taxonomy" id="39947"/>
    <lineage>
        <taxon>Eukaryota</taxon>
        <taxon>Viridiplantae</taxon>
        <taxon>Streptophyta</taxon>
        <taxon>Embryophyta</taxon>
        <taxon>Tracheophyta</taxon>
        <taxon>Spermatophyta</taxon>
        <taxon>Magnoliopsida</taxon>
        <taxon>Liliopsida</taxon>
        <taxon>Poales</taxon>
        <taxon>Poaceae</taxon>
        <taxon>BOP clade</taxon>
        <taxon>Oryzoideae</taxon>
        <taxon>Oryzeae</taxon>
        <taxon>Oryzinae</taxon>
        <taxon>Oryza</taxon>
        <taxon>Oryza sativa</taxon>
    </lineage>
</organism>
<comment type="function">
    <text evidence="3 4">Probable beta-1,4-xylosyltransferase involved in xylan biosynthesis in cell walls.</text>
</comment>
<comment type="subcellular location">
    <subcellularLocation>
        <location evidence="4">Golgi apparatus membrane</location>
        <topology evidence="8">Single-pass type II membrane protein</topology>
    </subcellularLocation>
</comment>
<comment type="similarity">
    <text evidence="7">Belongs to the glycosyltransferase 43 family.</text>
</comment>
<comment type="sequence caution" evidence="7">
    <conflict type="erroneous initiation">
        <sequence resource="EMBL-CDS" id="BAB20991"/>
    </conflict>
    <text>Truncated N-terminus.</text>
</comment>
<comment type="sequence caution" evidence="7">
    <conflict type="erroneous initiation">
        <sequence resource="EMBL-CDS" id="BAF20325"/>
    </conflict>
    <text>Truncated N-terminus.</text>
</comment>
<comment type="sequence caution" evidence="7">
    <conflict type="erroneous gene model prediction">
        <sequence resource="EMBL-CDS" id="BAS99209"/>
    </conflict>
</comment>
<protein>
    <recommendedName>
        <fullName evidence="7">Probable beta-1,4-xylosyltransferase IRX14</fullName>
        <ecNumber evidence="7">2.4.2.-</ecNumber>
    </recommendedName>
    <alternativeName>
        <fullName evidence="6">OsGT43J</fullName>
    </alternativeName>
    <alternativeName>
        <fullName evidence="7">Probable glucuronosyltransferase Os06g0687900</fullName>
    </alternativeName>
    <alternativeName>
        <fullName evidence="7">Protein IRREGULAR XYLEM 14 homolog</fullName>
        <shortName evidence="5">OsIRX14</shortName>
    </alternativeName>
</protein>
<reference key="1">
    <citation type="journal article" date="2014" name="Plant Signal. Behav.">
        <title>Functional roles of rice glycosyltransferase family GT43 in xylan biosynthesis.</title>
        <authorList>
            <person name="Lee C."/>
            <person name="Teng Q."/>
            <person name="Zhong R."/>
            <person name="Yuan Y."/>
            <person name="Ye Z.H."/>
        </authorList>
    </citation>
    <scope>NUCLEOTIDE SEQUENCE [MRNA]</scope>
    <scope>FUNCTION</scope>
    <scope>SUBCELLULAR LOCATION</scope>
</reference>
<reference key="2">
    <citation type="journal article" date="2005" name="Nature">
        <title>The map-based sequence of the rice genome.</title>
        <authorList>
            <consortium name="International rice genome sequencing project (IRGSP)"/>
        </authorList>
    </citation>
    <scope>NUCLEOTIDE SEQUENCE [LARGE SCALE GENOMIC DNA]</scope>
    <source>
        <strain>cv. Nipponbare</strain>
    </source>
</reference>
<reference key="3">
    <citation type="journal article" date="2008" name="Nucleic Acids Res.">
        <title>The rice annotation project database (RAP-DB): 2008 update.</title>
        <authorList>
            <consortium name="The rice annotation project (RAP)"/>
        </authorList>
    </citation>
    <scope>GENOME REANNOTATION</scope>
    <source>
        <strain>cv. Nipponbare</strain>
    </source>
</reference>
<reference key="4">
    <citation type="journal article" date="2013" name="Rice">
        <title>Improvement of the Oryza sativa Nipponbare reference genome using next generation sequence and optical map data.</title>
        <authorList>
            <person name="Kawahara Y."/>
            <person name="de la Bastide M."/>
            <person name="Hamilton J.P."/>
            <person name="Kanamori H."/>
            <person name="McCombie W.R."/>
            <person name="Ouyang S."/>
            <person name="Schwartz D.C."/>
            <person name="Tanaka T."/>
            <person name="Wu J."/>
            <person name="Zhou S."/>
            <person name="Childs K.L."/>
            <person name="Davidson R.M."/>
            <person name="Lin H."/>
            <person name="Quesada-Ocampo L."/>
            <person name="Vaillancourt B."/>
            <person name="Sakai H."/>
            <person name="Lee S.S."/>
            <person name="Kim J."/>
            <person name="Numa H."/>
            <person name="Itoh T."/>
            <person name="Buell C.R."/>
            <person name="Matsumoto T."/>
        </authorList>
    </citation>
    <scope>GENOME REANNOTATION</scope>
    <source>
        <strain>cv. Nipponbare</strain>
    </source>
</reference>
<reference key="5">
    <citation type="journal article" date="2005" name="PLoS Biol.">
        <title>The genomes of Oryza sativa: a history of duplications.</title>
        <authorList>
            <person name="Yu J."/>
            <person name="Wang J."/>
            <person name="Lin W."/>
            <person name="Li S."/>
            <person name="Li H."/>
            <person name="Zhou J."/>
            <person name="Ni P."/>
            <person name="Dong W."/>
            <person name="Hu S."/>
            <person name="Zeng C."/>
            <person name="Zhang J."/>
            <person name="Zhang Y."/>
            <person name="Li R."/>
            <person name="Xu Z."/>
            <person name="Li S."/>
            <person name="Li X."/>
            <person name="Zheng H."/>
            <person name="Cong L."/>
            <person name="Lin L."/>
            <person name="Yin J."/>
            <person name="Geng J."/>
            <person name="Li G."/>
            <person name="Shi J."/>
            <person name="Liu J."/>
            <person name="Lv H."/>
            <person name="Li J."/>
            <person name="Wang J."/>
            <person name="Deng Y."/>
            <person name="Ran L."/>
            <person name="Shi X."/>
            <person name="Wang X."/>
            <person name="Wu Q."/>
            <person name="Li C."/>
            <person name="Ren X."/>
            <person name="Wang J."/>
            <person name="Wang X."/>
            <person name="Li D."/>
            <person name="Liu D."/>
            <person name="Zhang X."/>
            <person name="Ji Z."/>
            <person name="Zhao W."/>
            <person name="Sun Y."/>
            <person name="Zhang Z."/>
            <person name="Bao J."/>
            <person name="Han Y."/>
            <person name="Dong L."/>
            <person name="Ji J."/>
            <person name="Chen P."/>
            <person name="Wu S."/>
            <person name="Liu J."/>
            <person name="Xiao Y."/>
            <person name="Bu D."/>
            <person name="Tan J."/>
            <person name="Yang L."/>
            <person name="Ye C."/>
            <person name="Zhang J."/>
            <person name="Xu J."/>
            <person name="Zhou Y."/>
            <person name="Yu Y."/>
            <person name="Zhang B."/>
            <person name="Zhuang S."/>
            <person name="Wei H."/>
            <person name="Liu B."/>
            <person name="Lei M."/>
            <person name="Yu H."/>
            <person name="Li Y."/>
            <person name="Xu H."/>
            <person name="Wei S."/>
            <person name="He X."/>
            <person name="Fang L."/>
            <person name="Zhang Z."/>
            <person name="Zhang Y."/>
            <person name="Huang X."/>
            <person name="Su Z."/>
            <person name="Tong W."/>
            <person name="Li J."/>
            <person name="Tong Z."/>
            <person name="Li S."/>
            <person name="Ye J."/>
            <person name="Wang L."/>
            <person name="Fang L."/>
            <person name="Lei T."/>
            <person name="Chen C.-S."/>
            <person name="Chen H.-C."/>
            <person name="Xu Z."/>
            <person name="Li H."/>
            <person name="Huang H."/>
            <person name="Zhang F."/>
            <person name="Xu H."/>
            <person name="Li N."/>
            <person name="Zhao C."/>
            <person name="Li S."/>
            <person name="Dong L."/>
            <person name="Huang Y."/>
            <person name="Li L."/>
            <person name="Xi Y."/>
            <person name="Qi Q."/>
            <person name="Li W."/>
            <person name="Zhang B."/>
            <person name="Hu W."/>
            <person name="Zhang Y."/>
            <person name="Tian X."/>
            <person name="Jiao Y."/>
            <person name="Liang X."/>
            <person name="Jin J."/>
            <person name="Gao L."/>
            <person name="Zheng W."/>
            <person name="Hao B."/>
            <person name="Liu S.-M."/>
            <person name="Wang W."/>
            <person name="Yuan L."/>
            <person name="Cao M."/>
            <person name="McDermott J."/>
            <person name="Samudrala R."/>
            <person name="Wang J."/>
            <person name="Wong G.K.-S."/>
            <person name="Yang H."/>
        </authorList>
    </citation>
    <scope>NUCLEOTIDE SEQUENCE [LARGE SCALE GENOMIC DNA]</scope>
    <source>
        <strain>cv. Nipponbare</strain>
    </source>
</reference>
<reference key="6">
    <citation type="submission" date="2001-01" db="EMBL/GenBank/DDBJ databases">
        <title>Cloning of cDNA coding for UDP-glucuronyltransferase-like protein in rice.</title>
        <authorList>
            <person name="Liu S."/>
            <person name="Takano T."/>
        </authorList>
    </citation>
    <scope>NUCLEOTIDE SEQUENCE [MRNA] OF 234-524</scope>
    <source>
        <strain>cv. Nipponbare</strain>
    </source>
</reference>
<reference key="7">
    <citation type="journal article" date="2013" name="Front. Plant Sci.">
        <title>Three novel rice genes closely related to the Arabidopsis IRX9, IRX9L, and IRX14 genes and their roles in xylan biosynthesis.</title>
        <authorList>
            <person name="Chiniquy D."/>
            <person name="Varanasi P."/>
            <person name="Oh T."/>
            <person name="Harholt J."/>
            <person name="Katnelson J."/>
            <person name="Singh S."/>
            <person name="Auer M."/>
            <person name="Simmons B."/>
            <person name="Adams P.D."/>
            <person name="Scheller H.V."/>
            <person name="Ronald P.C."/>
        </authorList>
    </citation>
    <scope>FUNCTION</scope>
</reference>
<keyword id="KW-0961">Cell wall biogenesis/degradation</keyword>
<keyword id="KW-0325">Glycoprotein</keyword>
<keyword id="KW-0328">Glycosyltransferase</keyword>
<keyword id="KW-0333">Golgi apparatus</keyword>
<keyword id="KW-0472">Membrane</keyword>
<keyword id="KW-1185">Reference proteome</keyword>
<keyword id="KW-0735">Signal-anchor</keyword>
<keyword id="KW-0808">Transferase</keyword>
<keyword id="KW-0812">Transmembrane</keyword>
<keyword id="KW-1133">Transmembrane helix</keyword>
<name>IRX14_ORYSJ</name>
<accession>Q653F4</accession>
<accession>A0A023NDK3</accession>
<accession>A0A0N7KMM2</accession>
<accession>Q0D9Z8</accession>
<accession>Q9FRT0</accession>
<sequence length="524" mass="57267">MMKSLLPQSQLRRSAAAASAARSSGGGAGSGGADGAGSDGGAGGRAPATSTFWFLLHALCCLVSLFLGFRFSRLLFFLLFSTTALYSSTSSSSSSAVLRATTTTTTTTTTTTTTTNTFTLSFQANPNPPPSNLSNHTALDAAGAAGHTQSHVVVGRHGIRIRPWPHPDPVEVMRAHRIMERVQEEQRRWYGVKEPRHVLVVTPTYSRAFQALHLTGLLHSLRNVPYPLTWIVVEAGGTTNATASLLARSDLTIVHIPFPDRMPHDWADRHATENRMRLHALRVIRERKMDGVIVFADDSNVHSLELFDEVQKVQWMGAVSVGILAHTGTADQPRLSEEDKQNMPLPVQGPACNSSGHLAGWHTFNSLPFAGKTATVVGEAAPVLPRGLEWAGFVLNSRILWKEAEGKPDWVKDLDAVGENGEEIENPLILLNDPSSVEPLGNCGKKILLWWLRVEARADSKFPQGWVIEPPLDIVVPAKRTPWPETTAELSAELVDSKQDQEGRRLSRTDRSSRSRSTTKRKEN</sequence>
<feature type="chain" id="PRO_0000407560" description="Probable beta-1,4-xylosyltransferase IRX14">
    <location>
        <begin position="1"/>
        <end position="524"/>
    </location>
</feature>
<feature type="topological domain" description="Cytoplasmic" evidence="7">
    <location>
        <begin position="1"/>
        <end position="51"/>
    </location>
</feature>
<feature type="transmembrane region" description="Helical; Signal-anchor for type II membrane protein" evidence="1">
    <location>
        <begin position="52"/>
        <end position="71"/>
    </location>
</feature>
<feature type="topological domain" description="Lumenal" evidence="7">
    <location>
        <begin position="72"/>
        <end position="524"/>
    </location>
</feature>
<feature type="region of interest" description="Disordered" evidence="2">
    <location>
        <begin position="21"/>
        <end position="41"/>
    </location>
</feature>
<feature type="region of interest" description="Disordered" evidence="2">
    <location>
        <begin position="492"/>
        <end position="524"/>
    </location>
</feature>
<feature type="compositionally biased region" description="Gly residues" evidence="2">
    <location>
        <begin position="24"/>
        <end position="41"/>
    </location>
</feature>
<feature type="compositionally biased region" description="Basic and acidic residues" evidence="2">
    <location>
        <begin position="495"/>
        <end position="513"/>
    </location>
</feature>
<feature type="glycosylation site" description="N-linked (GlcNAc...) asparagine" evidence="1">
    <location>
        <position position="132"/>
    </location>
</feature>
<feature type="glycosylation site" description="N-linked (GlcNAc...) asparagine" evidence="1">
    <location>
        <position position="135"/>
    </location>
</feature>
<feature type="glycosylation site" description="N-linked (GlcNAc...) asparagine" evidence="1">
    <location>
        <position position="240"/>
    </location>
</feature>
<feature type="glycosylation site" description="N-linked (GlcNAc...) asparagine" evidence="1">
    <location>
        <position position="353"/>
    </location>
</feature>
<feature type="sequence conflict" description="In Ref. 6; BAB20991." evidence="7" ref="6">
    <original>D</original>
    <variation>Y</variation>
    <location>
        <position position="409"/>
    </location>
</feature>